<evidence type="ECO:0000255" key="1">
    <source>
        <dbReference type="HAMAP-Rule" id="MF_01594"/>
    </source>
</evidence>
<organism>
    <name type="scientific">Escherichia coli O6:H1 (strain CFT073 / ATCC 700928 / UPEC)</name>
    <dbReference type="NCBI Taxonomy" id="199310"/>
    <lineage>
        <taxon>Bacteria</taxon>
        <taxon>Pseudomonadati</taxon>
        <taxon>Pseudomonadota</taxon>
        <taxon>Gammaproteobacteria</taxon>
        <taxon>Enterobacterales</taxon>
        <taxon>Enterobacteriaceae</taxon>
        <taxon>Escherichia</taxon>
    </lineage>
</organism>
<dbReference type="EC" id="3.4.21.105" evidence="1"/>
<dbReference type="EMBL" id="AE014075">
    <property type="protein sequence ID" value="AAN82639.1"/>
    <property type="molecule type" value="Genomic_DNA"/>
</dbReference>
<dbReference type="RefSeq" id="WP_000928723.1">
    <property type="nucleotide sequence ID" value="NZ_CP051263.1"/>
</dbReference>
<dbReference type="SMR" id="Q8FCS5"/>
<dbReference type="STRING" id="199310.c4201"/>
<dbReference type="MEROPS" id="S54.016"/>
<dbReference type="GeneID" id="86862178"/>
<dbReference type="KEGG" id="ecc:c4201"/>
<dbReference type="eggNOG" id="COG0705">
    <property type="taxonomic scope" value="Bacteria"/>
</dbReference>
<dbReference type="HOGENOM" id="CLU_058989_0_0_6"/>
<dbReference type="BioCyc" id="ECOL199310:C4201-MONOMER"/>
<dbReference type="Proteomes" id="UP000001410">
    <property type="component" value="Chromosome"/>
</dbReference>
<dbReference type="GO" id="GO:0005886">
    <property type="term" value="C:plasma membrane"/>
    <property type="evidence" value="ECO:0007669"/>
    <property type="project" value="UniProtKB-SubCell"/>
</dbReference>
<dbReference type="GO" id="GO:0004252">
    <property type="term" value="F:serine-type endopeptidase activity"/>
    <property type="evidence" value="ECO:0007669"/>
    <property type="project" value="UniProtKB-UniRule"/>
</dbReference>
<dbReference type="GO" id="GO:0006508">
    <property type="term" value="P:proteolysis"/>
    <property type="evidence" value="ECO:0007669"/>
    <property type="project" value="UniProtKB-UniRule"/>
</dbReference>
<dbReference type="FunFam" id="1.20.1540.10:FF:000003">
    <property type="entry name" value="Rhomboid protease GlpG"/>
    <property type="match status" value="1"/>
</dbReference>
<dbReference type="FunFam" id="3.30.70.2350:FF:000001">
    <property type="entry name" value="Rhomboid protease GlpG"/>
    <property type="match status" value="1"/>
</dbReference>
<dbReference type="Gene3D" id="3.30.70.2350">
    <property type="match status" value="1"/>
</dbReference>
<dbReference type="Gene3D" id="1.20.1540.10">
    <property type="entry name" value="Rhomboid-like"/>
    <property type="match status" value="1"/>
</dbReference>
<dbReference type="HAMAP" id="MF_01594">
    <property type="entry name" value="Rhomboid_GlpG"/>
    <property type="match status" value="1"/>
</dbReference>
<dbReference type="InterPro" id="IPR038236">
    <property type="entry name" value="GlpG_N_sf"/>
</dbReference>
<dbReference type="InterPro" id="IPR022732">
    <property type="entry name" value="Peptidase_S54_GlpG_N"/>
</dbReference>
<dbReference type="InterPro" id="IPR022764">
    <property type="entry name" value="Peptidase_S54_rhomboid_dom"/>
</dbReference>
<dbReference type="InterPro" id="IPR035952">
    <property type="entry name" value="Rhomboid-like_sf"/>
</dbReference>
<dbReference type="InterPro" id="IPR023662">
    <property type="entry name" value="Rhomboid_protease_GlpG"/>
</dbReference>
<dbReference type="NCBIfam" id="NF008155">
    <property type="entry name" value="PRK10907.1"/>
    <property type="match status" value="1"/>
</dbReference>
<dbReference type="NCBIfam" id="TIGR04239">
    <property type="entry name" value="rhombo_GlpG"/>
    <property type="match status" value="1"/>
</dbReference>
<dbReference type="PANTHER" id="PTHR43066:SF26">
    <property type="entry name" value="RHOMBOID PROTEASE GLPG"/>
    <property type="match status" value="1"/>
</dbReference>
<dbReference type="PANTHER" id="PTHR43066">
    <property type="entry name" value="RHOMBOID-RELATED PROTEIN"/>
    <property type="match status" value="1"/>
</dbReference>
<dbReference type="Pfam" id="PF01694">
    <property type="entry name" value="Rhomboid"/>
    <property type="match status" value="1"/>
</dbReference>
<dbReference type="Pfam" id="PF12122">
    <property type="entry name" value="Rhomboid_N"/>
    <property type="match status" value="1"/>
</dbReference>
<dbReference type="SUPFAM" id="SSF144091">
    <property type="entry name" value="Rhomboid-like"/>
    <property type="match status" value="1"/>
</dbReference>
<comment type="function">
    <text evidence="1">Rhomboid-type serine protease that catalyzes intramembrane proteolysis.</text>
</comment>
<comment type="catalytic activity">
    <reaction evidence="1">
        <text>Cleaves type-1 transmembrane domains using a catalytic dyad composed of serine and histidine that are contributed by different transmembrane domains.</text>
        <dbReference type="EC" id="3.4.21.105"/>
    </reaction>
</comment>
<comment type="subcellular location">
    <subcellularLocation>
        <location evidence="1">Cell inner membrane</location>
        <topology evidence="1">Multi-pass membrane protein</topology>
    </subcellularLocation>
</comment>
<comment type="similarity">
    <text evidence="1">Belongs to the peptidase S54 family.</text>
</comment>
<accession>Q8FCS5</accession>
<keyword id="KW-0997">Cell inner membrane</keyword>
<keyword id="KW-1003">Cell membrane</keyword>
<keyword id="KW-0378">Hydrolase</keyword>
<keyword id="KW-0472">Membrane</keyword>
<keyword id="KW-0645">Protease</keyword>
<keyword id="KW-1185">Reference proteome</keyword>
<keyword id="KW-0720">Serine protease</keyword>
<keyword id="KW-0812">Transmembrane</keyword>
<keyword id="KW-1133">Transmembrane helix</keyword>
<gene>
    <name evidence="1" type="primary">glpG</name>
    <name type="ordered locus">c4201</name>
</gene>
<sequence>MLMITSFANPRVAQAFVDYMATQGVILTIQQHNQSDVWLADESQAERVRAELARFLENPADPRYLAASWQAGHTGSGLHYRRYPFFAALRERAGPVTWVMMIACVVVFIAMQILGDQEVMLWLAWPFDPTLKFEFWRYFTHALMHFSLMHILFNLLWWWYLGGAVEKRLGSGKLIVITLISALLSGYVQQKFSGPWFGGLSGVVYALMGYVWLRGERDPQSGIYLQRGLIIFALIWIVAGWFDLFGMSMANGAHIAGLAVGLAMAFVDSLNARKRK</sequence>
<reference key="1">
    <citation type="journal article" date="2002" name="Proc. Natl. Acad. Sci. U.S.A.">
        <title>Extensive mosaic structure revealed by the complete genome sequence of uropathogenic Escherichia coli.</title>
        <authorList>
            <person name="Welch R.A."/>
            <person name="Burland V."/>
            <person name="Plunkett G. III"/>
            <person name="Redford P."/>
            <person name="Roesch P."/>
            <person name="Rasko D."/>
            <person name="Buckles E.L."/>
            <person name="Liou S.-R."/>
            <person name="Boutin A."/>
            <person name="Hackett J."/>
            <person name="Stroud D."/>
            <person name="Mayhew G.F."/>
            <person name="Rose D.J."/>
            <person name="Zhou S."/>
            <person name="Schwartz D.C."/>
            <person name="Perna N.T."/>
            <person name="Mobley H.L.T."/>
            <person name="Donnenberg M.S."/>
            <person name="Blattner F.R."/>
        </authorList>
    </citation>
    <scope>NUCLEOTIDE SEQUENCE [LARGE SCALE GENOMIC DNA]</scope>
    <source>
        <strain>CFT073 / ATCC 700928 / UPEC</strain>
    </source>
</reference>
<protein>
    <recommendedName>
        <fullName evidence="1">Rhomboid protease GlpG</fullName>
        <ecNumber evidence="1">3.4.21.105</ecNumber>
    </recommendedName>
    <alternativeName>
        <fullName evidence="1">Intramembrane serine protease</fullName>
    </alternativeName>
</protein>
<proteinExistence type="inferred from homology"/>
<name>GLPG_ECOL6</name>
<feature type="chain" id="PRO_0000321683" description="Rhomboid protease GlpG">
    <location>
        <begin position="1"/>
        <end position="276"/>
    </location>
</feature>
<feature type="transmembrane region" description="Helical" evidence="1">
    <location>
        <begin position="94"/>
        <end position="114"/>
    </location>
</feature>
<feature type="transmembrane region" description="Helical" evidence="1">
    <location>
        <begin position="142"/>
        <end position="162"/>
    </location>
</feature>
<feature type="transmembrane region" description="Helical" evidence="1">
    <location>
        <begin position="169"/>
        <end position="189"/>
    </location>
</feature>
<feature type="transmembrane region" description="Helical" evidence="1">
    <location>
        <begin position="192"/>
        <end position="212"/>
    </location>
</feature>
<feature type="transmembrane region" description="Helical" evidence="1">
    <location>
        <begin position="229"/>
        <end position="249"/>
    </location>
</feature>
<feature type="transmembrane region" description="Helical" evidence="1">
    <location>
        <begin position="250"/>
        <end position="270"/>
    </location>
</feature>
<feature type="active site" description="Nucleophile" evidence="1">
    <location>
        <position position="201"/>
    </location>
</feature>
<feature type="active site" evidence="1">
    <location>
        <position position="254"/>
    </location>
</feature>